<evidence type="ECO:0000255" key="1">
    <source>
        <dbReference type="PROSITE-ProRule" id="PRU01185"/>
    </source>
</evidence>
<evidence type="ECO:0000305" key="2"/>
<reference key="1">
    <citation type="journal article" date="2003" name="Nature">
        <title>The genome sequence of the filamentous fungus Neurospora crassa.</title>
        <authorList>
            <person name="Galagan J.E."/>
            <person name="Calvo S.E."/>
            <person name="Borkovich K.A."/>
            <person name="Selker E.U."/>
            <person name="Read N.D."/>
            <person name="Jaffe D.B."/>
            <person name="FitzHugh W."/>
            <person name="Ma L.-J."/>
            <person name="Smirnov S."/>
            <person name="Purcell S."/>
            <person name="Rehman B."/>
            <person name="Elkins T."/>
            <person name="Engels R."/>
            <person name="Wang S."/>
            <person name="Nielsen C.B."/>
            <person name="Butler J."/>
            <person name="Endrizzi M."/>
            <person name="Qui D."/>
            <person name="Ianakiev P."/>
            <person name="Bell-Pedersen D."/>
            <person name="Nelson M.A."/>
            <person name="Werner-Washburne M."/>
            <person name="Selitrennikoff C.P."/>
            <person name="Kinsey J.A."/>
            <person name="Braun E.L."/>
            <person name="Zelter A."/>
            <person name="Schulte U."/>
            <person name="Kothe G.O."/>
            <person name="Jedd G."/>
            <person name="Mewes H.-W."/>
            <person name="Staben C."/>
            <person name="Marcotte E."/>
            <person name="Greenberg D."/>
            <person name="Roy A."/>
            <person name="Foley K."/>
            <person name="Naylor J."/>
            <person name="Stange-Thomann N."/>
            <person name="Barrett R."/>
            <person name="Gnerre S."/>
            <person name="Kamal M."/>
            <person name="Kamvysselis M."/>
            <person name="Mauceli E.W."/>
            <person name="Bielke C."/>
            <person name="Rudd S."/>
            <person name="Frishman D."/>
            <person name="Krystofova S."/>
            <person name="Rasmussen C."/>
            <person name="Metzenberg R.L."/>
            <person name="Perkins D.D."/>
            <person name="Kroken S."/>
            <person name="Cogoni C."/>
            <person name="Macino G."/>
            <person name="Catcheside D.E.A."/>
            <person name="Li W."/>
            <person name="Pratt R.J."/>
            <person name="Osmani S.A."/>
            <person name="DeSouza C.P.C."/>
            <person name="Glass N.L."/>
            <person name="Orbach M.J."/>
            <person name="Berglund J.A."/>
            <person name="Voelker R."/>
            <person name="Yarden O."/>
            <person name="Plamann M."/>
            <person name="Seiler S."/>
            <person name="Dunlap J.C."/>
            <person name="Radford A."/>
            <person name="Aramayo R."/>
            <person name="Natvig D.O."/>
            <person name="Alex L.A."/>
            <person name="Mannhaupt G."/>
            <person name="Ebbole D.J."/>
            <person name="Freitag M."/>
            <person name="Paulsen I."/>
            <person name="Sachs M.S."/>
            <person name="Lander E.S."/>
            <person name="Nusbaum C."/>
            <person name="Birren B.W."/>
        </authorList>
    </citation>
    <scope>NUCLEOTIDE SEQUENCE [LARGE SCALE GENOMIC DNA]</scope>
    <source>
        <strain>ATCC 24698 / 74-OR23-1A / CBS 708.71 / DSM 1257 / FGSC 987</strain>
    </source>
</reference>
<dbReference type="EMBL" id="CM002236">
    <property type="protein sequence ID" value="ESA44132.1"/>
    <property type="molecule type" value="Genomic_DNA"/>
</dbReference>
<dbReference type="EMBL" id="CM002236">
    <property type="protein sequence ID" value="ESA44133.1"/>
    <property type="molecule type" value="Genomic_DNA"/>
</dbReference>
<dbReference type="RefSeq" id="XP_011393203.1">
    <property type="nucleotide sequence ID" value="XM_011394901.1"/>
</dbReference>
<dbReference type="RefSeq" id="XP_011393204.1">
    <property type="nucleotide sequence ID" value="XM_011394902.1"/>
</dbReference>
<dbReference type="SMR" id="Q7SD63"/>
<dbReference type="FunCoup" id="Q7SD63">
    <property type="interactions" value="868"/>
</dbReference>
<dbReference type="STRING" id="367110.Q7SD63"/>
<dbReference type="PaxDb" id="5141-EFNCRP00000006434"/>
<dbReference type="EnsemblFungi" id="ESA44132">
    <property type="protein sequence ID" value="ESA44132"/>
    <property type="gene ID" value="NCU08388"/>
</dbReference>
<dbReference type="EnsemblFungi" id="ESA44133">
    <property type="protein sequence ID" value="ESA44133"/>
    <property type="gene ID" value="NCU08388"/>
</dbReference>
<dbReference type="GeneID" id="3880084"/>
<dbReference type="KEGG" id="ncr:NCU08388"/>
<dbReference type="VEuPathDB" id="FungiDB:NCU08388"/>
<dbReference type="HOGENOM" id="CLU_031567_1_0_1"/>
<dbReference type="InParanoid" id="Q7SD63"/>
<dbReference type="OrthoDB" id="10252687at2759"/>
<dbReference type="Proteomes" id="UP000001805">
    <property type="component" value="Chromosome 1, Linkage Group I"/>
</dbReference>
<dbReference type="GO" id="GO:0003690">
    <property type="term" value="F:double-stranded DNA binding"/>
    <property type="evidence" value="ECO:0000318"/>
    <property type="project" value="GO_Central"/>
</dbReference>
<dbReference type="GO" id="GO:0003723">
    <property type="term" value="F:RNA binding"/>
    <property type="evidence" value="ECO:0000318"/>
    <property type="project" value="GO_Central"/>
</dbReference>
<dbReference type="FunFam" id="1.10.10.10:FF:000366">
    <property type="entry name" value="COP9 signalosome complex subunit"/>
    <property type="match status" value="1"/>
</dbReference>
<dbReference type="Gene3D" id="1.10.10.10">
    <property type="entry name" value="Winged helix-like DNA-binding domain superfamily/Winged helix DNA-binding domain"/>
    <property type="match status" value="1"/>
</dbReference>
<dbReference type="InterPro" id="IPR045114">
    <property type="entry name" value="Csn12-like"/>
</dbReference>
<dbReference type="InterPro" id="IPR000717">
    <property type="entry name" value="PCI_dom"/>
</dbReference>
<dbReference type="InterPro" id="IPR036388">
    <property type="entry name" value="WH-like_DNA-bd_sf"/>
</dbReference>
<dbReference type="PANTHER" id="PTHR12732:SF0">
    <property type="entry name" value="PCI DOMAIN-CONTAINING PROTEIN 2"/>
    <property type="match status" value="1"/>
</dbReference>
<dbReference type="PANTHER" id="PTHR12732">
    <property type="entry name" value="UNCHARACTERIZED PROTEASOME COMPONENT REGION PCI-CONTAINING"/>
    <property type="match status" value="1"/>
</dbReference>
<dbReference type="Pfam" id="PF01399">
    <property type="entry name" value="PCI"/>
    <property type="match status" value="1"/>
</dbReference>
<dbReference type="SMART" id="SM00753">
    <property type="entry name" value="PAM"/>
    <property type="match status" value="1"/>
</dbReference>
<dbReference type="PROSITE" id="PS50250">
    <property type="entry name" value="PCI"/>
    <property type="match status" value="1"/>
</dbReference>
<feature type="chain" id="PRO_0000121043" description="Protein CSN12 homolog">
    <location>
        <begin position="1"/>
        <end position="452"/>
    </location>
</feature>
<feature type="domain" description="PCI" evidence="1">
    <location>
        <begin position="249"/>
        <end position="446"/>
    </location>
</feature>
<sequence>MDSLIRTFSNAQSSRDGYQLAQTLSPDLPQQQLQAIWKSCGHHDAQNVIKRGIQNSTSGFEKLPKDEVQGWSDVYLAYWKAIGELLPALNQAPQSSWTKVYDAWKELLSALYRGYIGQGFEAWSIPCLYVVAKNLRFFALKADEERNNNVAAGDTSGQIFQDDFDPESEQNQKLEDCARQLNRIFTLCLNDRAPLEESRKWGIYYIINLLFKTYFKLNSASLSKNILKTLSAYRGDMPPLSAFPKSQQVTFKYYEGVLCFLEENYFQAEEHLTQAWSLCHKDAMKNKELILTYLVPCHLLTTHTLPSQKLLEPYPRLQKLFLPLSNCIKKGELHAFDLALQQGEDEFVKRRIYLTLERGRDIALRNLLRKVFIAGGFEESKVEGGPRVRRTRIPVAEFAAAISLGSKQMLETDEIECLMANMIYKNLMKGYIARERGFVVLSKSGAFPGTGV</sequence>
<protein>
    <recommendedName>
        <fullName>Protein CSN12 homolog</fullName>
    </recommendedName>
    <alternativeName>
        <fullName>COP9 signalosome protein 8</fullName>
    </alternativeName>
</protein>
<comment type="similarity">
    <text evidence="2">Belongs to the CSN12 family.</text>
</comment>
<keyword id="KW-1185">Reference proteome</keyword>
<name>CSN12_NEUCR</name>
<gene>
    <name type="primary">csn-8</name>
    <name type="synonym">csn12</name>
    <name type="ORF">NCU08388</name>
</gene>
<proteinExistence type="inferred from homology"/>
<organism>
    <name type="scientific">Neurospora crassa (strain ATCC 24698 / 74-OR23-1A / CBS 708.71 / DSM 1257 / FGSC 987)</name>
    <dbReference type="NCBI Taxonomy" id="367110"/>
    <lineage>
        <taxon>Eukaryota</taxon>
        <taxon>Fungi</taxon>
        <taxon>Dikarya</taxon>
        <taxon>Ascomycota</taxon>
        <taxon>Pezizomycotina</taxon>
        <taxon>Sordariomycetes</taxon>
        <taxon>Sordariomycetidae</taxon>
        <taxon>Sordariales</taxon>
        <taxon>Sordariaceae</taxon>
        <taxon>Neurospora</taxon>
    </lineage>
</organism>
<accession>Q7SD63</accession>
<accession>V5IQ30</accession>